<sequence>MWGGSKLSSSGSRFLGALRSGFQSTQVDSSRLTTSAVYPKNQLSWILQIKPWVFNENRIMWFKSYSITFACLNWMKSYRLPWTRPYSTSRTTVDKNEMKTFLALAHRWWDEQGVYAPLHSMNDLRVPFIRDNLLRTVATHQPGKPLSGMKILDVGCGGGLLTEPLGRLGASVIGIDPVDENIKTAQHHKSFDPVLDKRIEYRTCSLEEIVKDTVETFDAVVASEVVEHVIDLETFIQCCFQVLKPDGSLFITTINKTQLSYALGIVFSEQIAGIVPKGTHTWEKFVSPEKLESILESNGLSVQTVVGMLYNPFSGYWHWSENTSLNYAAHALKSSLQEQPAPAEFALKGEAEELQAEASTNSGVQEDLKK</sequence>
<name>COQ3_BOVIN</name>
<protein>
    <recommendedName>
        <fullName evidence="2">Ubiquinone biosynthesis O-methyltransferase, mitochondrial</fullName>
    </recommendedName>
    <alternativeName>
        <fullName evidence="2">3-demethylubiquinol 3-O-methyltransferase</fullName>
        <ecNumber evidence="2">2.1.1.64</ecNumber>
    </alternativeName>
    <alternativeName>
        <fullName evidence="2">3-demethylubiquinone 3-O-methyltransferase</fullName>
        <ecNumber evidence="2">2.1.1.-</ecNumber>
    </alternativeName>
    <alternativeName>
        <fullName evidence="2">Polyprenyldihydroxybenzoate methyltransferase</fullName>
        <ecNumber evidence="2">2.1.1.114</ecNumber>
    </alternativeName>
</protein>
<comment type="function">
    <text evidence="2">O-methyltransferase required for two non-consecutive steps during ubiquinone biosynthesis. Catalyzes the 2 O-methylation of 3,4-dihydroxy-5-(all-trans-decaprenyl)benzoic acid into 4-hydroxy-3-methoxy-5-(all-trans-decaprenyl)benzoic acid. Also catalyzes the last step of ubiquinone biosynthesis by mediating methylation of 3-demethylubiquinone into ubiquinone. Also able to mediate the methylation of 3-demethylubiquinol-10 into ubiquinol-10.</text>
</comment>
<comment type="catalytic activity">
    <reaction evidence="2">
        <text>3,4-dihydroxy-5-(all-trans-decaprenyl)benzoate + S-adenosyl-L-methionine = 4-hydroxy-3-methoxy-5-(all-trans-decaprenyl)benzoate + S-adenosyl-L-homocysteine + H(+)</text>
        <dbReference type="Rhea" id="RHEA:44492"/>
        <dbReference type="ChEBI" id="CHEBI:15378"/>
        <dbReference type="ChEBI" id="CHEBI:57856"/>
        <dbReference type="ChEBI" id="CHEBI:59789"/>
        <dbReference type="ChEBI" id="CHEBI:62793"/>
        <dbReference type="ChEBI" id="CHEBI:62796"/>
        <dbReference type="EC" id="2.1.1.114"/>
    </reaction>
</comment>
<comment type="catalytic activity">
    <reaction evidence="2">
        <text>a 3-demethylubiquinone + S-adenosyl-L-methionine = a ubiquinone + S-adenosyl-L-homocysteine</text>
        <dbReference type="Rhea" id="RHEA:81215"/>
        <dbReference type="Rhea" id="RHEA-COMP:9565"/>
        <dbReference type="Rhea" id="RHEA-COMP:19654"/>
        <dbReference type="ChEBI" id="CHEBI:16389"/>
        <dbReference type="ChEBI" id="CHEBI:57856"/>
        <dbReference type="ChEBI" id="CHEBI:59789"/>
        <dbReference type="ChEBI" id="CHEBI:231825"/>
    </reaction>
</comment>
<comment type="catalytic activity">
    <reaction evidence="2">
        <text>3-demethylubiquinol-10 + S-adenosyl-L-methionine = ubiquinol-10 + S-adenosyl-L-homocysteine + H(+)</text>
        <dbReference type="Rhea" id="RHEA:44412"/>
        <dbReference type="ChEBI" id="CHEBI:15378"/>
        <dbReference type="ChEBI" id="CHEBI:57856"/>
        <dbReference type="ChEBI" id="CHEBI:59789"/>
        <dbReference type="ChEBI" id="CHEBI:64182"/>
        <dbReference type="ChEBI" id="CHEBI:64183"/>
        <dbReference type="EC" id="2.1.1.64"/>
    </reaction>
</comment>
<comment type="cofactor">
    <cofactor evidence="2">
        <name>Mg(2+)</name>
        <dbReference type="ChEBI" id="CHEBI:18420"/>
    </cofactor>
</comment>
<comment type="pathway">
    <text evidence="2">Cofactor biosynthesis; ubiquinone biosynthesis.</text>
</comment>
<comment type="subunit">
    <text evidence="2">Component of a multi-subunit COQ enzyme complex, composed of at least COQ3, COQ4, COQ5, COQ6, COQ7 and COQ9.</text>
</comment>
<comment type="subcellular location">
    <subcellularLocation>
        <location evidence="2">Mitochondrion inner membrane</location>
        <topology evidence="2">Peripheral membrane protein</topology>
        <orientation evidence="2">Matrix side</orientation>
    </subcellularLocation>
</comment>
<comment type="similarity">
    <text evidence="2">Belongs to the class I-like SAM-binding methyltransferase superfamily. UbiG/COQ3 family.</text>
</comment>
<accession>Q3T131</accession>
<feature type="transit peptide" description="Mitochondrion" evidence="2">
    <location>
        <begin position="1"/>
        <end position="86"/>
    </location>
</feature>
<feature type="chain" id="PRO_0000283068" description="Ubiquinone biosynthesis O-methyltransferase, mitochondrial">
    <location>
        <begin position="87"/>
        <end position="370"/>
    </location>
</feature>
<feature type="binding site" evidence="2">
    <location>
        <position position="125"/>
    </location>
    <ligand>
        <name>S-adenosyl-L-methionine</name>
        <dbReference type="ChEBI" id="CHEBI:59789"/>
    </ligand>
</feature>
<feature type="binding site" evidence="2">
    <location>
        <position position="155"/>
    </location>
    <ligand>
        <name>S-adenosyl-L-methionine</name>
        <dbReference type="ChEBI" id="CHEBI:59789"/>
    </ligand>
</feature>
<feature type="binding site" evidence="2">
    <location>
        <position position="176"/>
    </location>
    <ligand>
        <name>S-adenosyl-L-methionine</name>
        <dbReference type="ChEBI" id="CHEBI:59789"/>
    </ligand>
</feature>
<feature type="binding site" evidence="2">
    <location>
        <position position="223"/>
    </location>
    <ligand>
        <name>S-adenosyl-L-methionine</name>
        <dbReference type="ChEBI" id="CHEBI:59789"/>
    </ligand>
</feature>
<feature type="binding site" evidence="2">
    <location>
        <position position="224"/>
    </location>
    <ligand>
        <name>Mg(2+)</name>
        <dbReference type="ChEBI" id="CHEBI:18420"/>
    </ligand>
</feature>
<feature type="binding site" evidence="2">
    <location>
        <position position="227"/>
    </location>
    <ligand>
        <name>Mg(2+)</name>
        <dbReference type="ChEBI" id="CHEBI:18420"/>
    </ligand>
</feature>
<feature type="binding site" evidence="2">
    <location>
        <position position="228"/>
    </location>
    <ligand>
        <name>Mg(2+)</name>
        <dbReference type="ChEBI" id="CHEBI:18420"/>
    </ligand>
</feature>
<feature type="modified residue" description="N6-acetyllysine" evidence="1">
    <location>
        <position position="144"/>
    </location>
</feature>
<feature type="modified residue" description="N6-acetyllysine" evidence="1">
    <location>
        <position position="150"/>
    </location>
</feature>
<feature type="modified residue" description="N6-acetyllysine" evidence="1">
    <location>
        <position position="197"/>
    </location>
</feature>
<keyword id="KW-0007">Acetylation</keyword>
<keyword id="KW-0460">Magnesium</keyword>
<keyword id="KW-0472">Membrane</keyword>
<keyword id="KW-0479">Metal-binding</keyword>
<keyword id="KW-0489">Methyltransferase</keyword>
<keyword id="KW-0496">Mitochondrion</keyword>
<keyword id="KW-0999">Mitochondrion inner membrane</keyword>
<keyword id="KW-1185">Reference proteome</keyword>
<keyword id="KW-0949">S-adenosyl-L-methionine</keyword>
<keyword id="KW-0808">Transferase</keyword>
<keyword id="KW-0809">Transit peptide</keyword>
<keyword id="KW-0831">Ubiquinone biosynthesis</keyword>
<reference key="1">
    <citation type="submission" date="2005-08" db="EMBL/GenBank/DDBJ databases">
        <authorList>
            <consortium name="NIH - Mammalian Gene Collection (MGC) project"/>
        </authorList>
    </citation>
    <scope>NUCLEOTIDE SEQUENCE [LARGE SCALE MRNA]</scope>
    <source>
        <strain>Crossbred X Angus</strain>
        <tissue>Ileum</tissue>
    </source>
</reference>
<organism>
    <name type="scientific">Bos taurus</name>
    <name type="common">Bovine</name>
    <dbReference type="NCBI Taxonomy" id="9913"/>
    <lineage>
        <taxon>Eukaryota</taxon>
        <taxon>Metazoa</taxon>
        <taxon>Chordata</taxon>
        <taxon>Craniata</taxon>
        <taxon>Vertebrata</taxon>
        <taxon>Euteleostomi</taxon>
        <taxon>Mammalia</taxon>
        <taxon>Eutheria</taxon>
        <taxon>Laurasiatheria</taxon>
        <taxon>Artiodactyla</taxon>
        <taxon>Ruminantia</taxon>
        <taxon>Pecora</taxon>
        <taxon>Bovidae</taxon>
        <taxon>Bovinae</taxon>
        <taxon>Bos</taxon>
    </lineage>
</organism>
<evidence type="ECO:0000250" key="1">
    <source>
        <dbReference type="UniProtKB" id="Q8BMS4"/>
    </source>
</evidence>
<evidence type="ECO:0000255" key="2">
    <source>
        <dbReference type="HAMAP-Rule" id="MF_03190"/>
    </source>
</evidence>
<gene>
    <name evidence="2" type="primary">COQ3</name>
</gene>
<proteinExistence type="evidence at transcript level"/>
<dbReference type="EC" id="2.1.1.64" evidence="2"/>
<dbReference type="EC" id="2.1.1.-" evidence="2"/>
<dbReference type="EC" id="2.1.1.114" evidence="2"/>
<dbReference type="EMBL" id="BC102147">
    <property type="protein sequence ID" value="AAI02148.1"/>
    <property type="molecule type" value="mRNA"/>
</dbReference>
<dbReference type="RefSeq" id="NP_001069678.1">
    <property type="nucleotide sequence ID" value="NM_001076210.2"/>
</dbReference>
<dbReference type="SMR" id="Q3T131"/>
<dbReference type="FunCoup" id="Q3T131">
    <property type="interactions" value="1250"/>
</dbReference>
<dbReference type="STRING" id="9913.ENSBTAP00000026292"/>
<dbReference type="PaxDb" id="9913-ENSBTAP00000026292"/>
<dbReference type="GeneID" id="540298"/>
<dbReference type="KEGG" id="bta:540298"/>
<dbReference type="CTD" id="51805"/>
<dbReference type="eggNOG" id="KOG1270">
    <property type="taxonomic scope" value="Eukaryota"/>
</dbReference>
<dbReference type="InParanoid" id="Q3T131"/>
<dbReference type="OrthoDB" id="3265906at2759"/>
<dbReference type="UniPathway" id="UPA00232"/>
<dbReference type="Proteomes" id="UP000009136">
    <property type="component" value="Unplaced"/>
</dbReference>
<dbReference type="GO" id="GO:0031314">
    <property type="term" value="C:extrinsic component of mitochondrial inner membrane"/>
    <property type="evidence" value="ECO:0007669"/>
    <property type="project" value="UniProtKB-UniRule"/>
</dbReference>
<dbReference type="GO" id="GO:0005739">
    <property type="term" value="C:mitochondrion"/>
    <property type="evidence" value="ECO:0000318"/>
    <property type="project" value="GO_Central"/>
</dbReference>
<dbReference type="GO" id="GO:0061542">
    <property type="term" value="F:3-demethylubiquinol 3-O-methyltransferase activity"/>
    <property type="evidence" value="ECO:0000318"/>
    <property type="project" value="GO_Central"/>
</dbReference>
<dbReference type="GO" id="GO:0120537">
    <property type="term" value="F:3-demethylubiquinone 3-O-methyltransferase activity"/>
    <property type="evidence" value="ECO:0000250"/>
    <property type="project" value="UniProtKB"/>
</dbReference>
<dbReference type="GO" id="GO:0010420">
    <property type="term" value="F:polyprenyldihydroxybenzoate methyltransferase activity"/>
    <property type="evidence" value="ECO:0000250"/>
    <property type="project" value="UniProtKB"/>
</dbReference>
<dbReference type="GO" id="GO:0032259">
    <property type="term" value="P:methylation"/>
    <property type="evidence" value="ECO:0007669"/>
    <property type="project" value="UniProtKB-KW"/>
</dbReference>
<dbReference type="GO" id="GO:0006744">
    <property type="term" value="P:ubiquinone biosynthetic process"/>
    <property type="evidence" value="ECO:0000250"/>
    <property type="project" value="UniProtKB"/>
</dbReference>
<dbReference type="CDD" id="cd02440">
    <property type="entry name" value="AdoMet_MTases"/>
    <property type="match status" value="1"/>
</dbReference>
<dbReference type="FunFam" id="3.40.50.150:FF:000142">
    <property type="entry name" value="Ubiquinone biosynthesis O-methyltransferase, mitochondrial"/>
    <property type="match status" value="1"/>
</dbReference>
<dbReference type="Gene3D" id="3.40.50.150">
    <property type="entry name" value="Vaccinia Virus protein VP39"/>
    <property type="match status" value="1"/>
</dbReference>
<dbReference type="HAMAP" id="MF_00472">
    <property type="entry name" value="UbiG"/>
    <property type="match status" value="1"/>
</dbReference>
<dbReference type="InterPro" id="IPR029063">
    <property type="entry name" value="SAM-dependent_MTases_sf"/>
</dbReference>
<dbReference type="InterPro" id="IPR010233">
    <property type="entry name" value="UbiG_MeTrfase"/>
</dbReference>
<dbReference type="NCBIfam" id="TIGR01983">
    <property type="entry name" value="UbiG"/>
    <property type="match status" value="1"/>
</dbReference>
<dbReference type="PANTHER" id="PTHR43464">
    <property type="entry name" value="METHYLTRANSFERASE"/>
    <property type="match status" value="1"/>
</dbReference>
<dbReference type="PANTHER" id="PTHR43464:SF19">
    <property type="entry name" value="UBIQUINONE BIOSYNTHESIS O-METHYLTRANSFERASE, MITOCHONDRIAL"/>
    <property type="match status" value="1"/>
</dbReference>
<dbReference type="Pfam" id="PF13489">
    <property type="entry name" value="Methyltransf_23"/>
    <property type="match status" value="1"/>
</dbReference>
<dbReference type="SUPFAM" id="SSF53335">
    <property type="entry name" value="S-adenosyl-L-methionine-dependent methyltransferases"/>
    <property type="match status" value="1"/>
</dbReference>